<evidence type="ECO:0000255" key="1">
    <source>
        <dbReference type="HAMAP-Rule" id="MF_00109"/>
    </source>
</evidence>
<sequence>MAEKRNIFLVGPMGAGKSTIGRHLAQMLHLEFHDSDQEIESRTGADIAWVFDVEGEEGFRIRETQVVADLTEKQGIVLATGGGSIQSKEIRNNLSARGIVVYLETTIDKQVARTQRDKRRPLLQVDDPREVLESLAEVRNPLYEEIADVIVKTDEQSAKVVANQIIEQLGF</sequence>
<feature type="chain" id="PRO_1000075958" description="Shikimate kinase">
    <location>
        <begin position="1"/>
        <end position="171"/>
    </location>
</feature>
<feature type="binding site" evidence="1">
    <location>
        <begin position="14"/>
        <end position="19"/>
    </location>
    <ligand>
        <name>ATP</name>
        <dbReference type="ChEBI" id="CHEBI:30616"/>
    </ligand>
</feature>
<feature type="binding site" evidence="1">
    <location>
        <position position="18"/>
    </location>
    <ligand>
        <name>Mg(2+)</name>
        <dbReference type="ChEBI" id="CHEBI:18420"/>
    </ligand>
</feature>
<feature type="binding site" evidence="1">
    <location>
        <position position="36"/>
    </location>
    <ligand>
        <name>substrate</name>
    </ligand>
</feature>
<feature type="binding site" evidence="1">
    <location>
        <position position="60"/>
    </location>
    <ligand>
        <name>substrate</name>
    </ligand>
</feature>
<feature type="binding site" evidence="1">
    <location>
        <position position="82"/>
    </location>
    <ligand>
        <name>substrate</name>
    </ligand>
</feature>
<feature type="binding site" evidence="1">
    <location>
        <position position="120"/>
    </location>
    <ligand>
        <name>ATP</name>
        <dbReference type="ChEBI" id="CHEBI:30616"/>
    </ligand>
</feature>
<feature type="binding site" evidence="1">
    <location>
        <position position="139"/>
    </location>
    <ligand>
        <name>substrate</name>
    </ligand>
</feature>
<feature type="binding site" evidence="1">
    <location>
        <position position="156"/>
    </location>
    <ligand>
        <name>ATP</name>
        <dbReference type="ChEBI" id="CHEBI:30616"/>
    </ligand>
</feature>
<organism>
    <name type="scientific">Shewanella pealeana (strain ATCC 700345 / ANG-SQ1)</name>
    <dbReference type="NCBI Taxonomy" id="398579"/>
    <lineage>
        <taxon>Bacteria</taxon>
        <taxon>Pseudomonadati</taxon>
        <taxon>Pseudomonadota</taxon>
        <taxon>Gammaproteobacteria</taxon>
        <taxon>Alteromonadales</taxon>
        <taxon>Shewanellaceae</taxon>
        <taxon>Shewanella</taxon>
    </lineage>
</organism>
<dbReference type="EC" id="2.7.1.71" evidence="1"/>
<dbReference type="EMBL" id="CP000851">
    <property type="protein sequence ID" value="ABV85566.1"/>
    <property type="molecule type" value="Genomic_DNA"/>
</dbReference>
<dbReference type="RefSeq" id="WP_012153507.1">
    <property type="nucleotide sequence ID" value="NC_009901.1"/>
</dbReference>
<dbReference type="SMR" id="A8GZ29"/>
<dbReference type="STRING" id="398579.Spea_0238"/>
<dbReference type="KEGG" id="spl:Spea_0238"/>
<dbReference type="eggNOG" id="COG0703">
    <property type="taxonomic scope" value="Bacteria"/>
</dbReference>
<dbReference type="HOGENOM" id="CLU_057607_2_2_6"/>
<dbReference type="OrthoDB" id="9800332at2"/>
<dbReference type="UniPathway" id="UPA00053">
    <property type="reaction ID" value="UER00088"/>
</dbReference>
<dbReference type="Proteomes" id="UP000002608">
    <property type="component" value="Chromosome"/>
</dbReference>
<dbReference type="GO" id="GO:0005829">
    <property type="term" value="C:cytosol"/>
    <property type="evidence" value="ECO:0007669"/>
    <property type="project" value="TreeGrafter"/>
</dbReference>
<dbReference type="GO" id="GO:0005524">
    <property type="term" value="F:ATP binding"/>
    <property type="evidence" value="ECO:0007669"/>
    <property type="project" value="UniProtKB-UniRule"/>
</dbReference>
<dbReference type="GO" id="GO:0000287">
    <property type="term" value="F:magnesium ion binding"/>
    <property type="evidence" value="ECO:0007669"/>
    <property type="project" value="UniProtKB-UniRule"/>
</dbReference>
<dbReference type="GO" id="GO:0004765">
    <property type="term" value="F:shikimate kinase activity"/>
    <property type="evidence" value="ECO:0007669"/>
    <property type="project" value="UniProtKB-UniRule"/>
</dbReference>
<dbReference type="GO" id="GO:0008652">
    <property type="term" value="P:amino acid biosynthetic process"/>
    <property type="evidence" value="ECO:0007669"/>
    <property type="project" value="UniProtKB-KW"/>
</dbReference>
<dbReference type="GO" id="GO:0009073">
    <property type="term" value="P:aromatic amino acid family biosynthetic process"/>
    <property type="evidence" value="ECO:0007669"/>
    <property type="project" value="UniProtKB-KW"/>
</dbReference>
<dbReference type="GO" id="GO:0009423">
    <property type="term" value="P:chorismate biosynthetic process"/>
    <property type="evidence" value="ECO:0007669"/>
    <property type="project" value="UniProtKB-UniRule"/>
</dbReference>
<dbReference type="CDD" id="cd00464">
    <property type="entry name" value="SK"/>
    <property type="match status" value="1"/>
</dbReference>
<dbReference type="FunFam" id="3.40.50.300:FF:000099">
    <property type="entry name" value="Shikimate kinase 1"/>
    <property type="match status" value="1"/>
</dbReference>
<dbReference type="Gene3D" id="3.40.50.300">
    <property type="entry name" value="P-loop containing nucleotide triphosphate hydrolases"/>
    <property type="match status" value="1"/>
</dbReference>
<dbReference type="HAMAP" id="MF_00109">
    <property type="entry name" value="Shikimate_kinase"/>
    <property type="match status" value="1"/>
</dbReference>
<dbReference type="InterPro" id="IPR027417">
    <property type="entry name" value="P-loop_NTPase"/>
</dbReference>
<dbReference type="InterPro" id="IPR031322">
    <property type="entry name" value="Shikimate/glucono_kinase"/>
</dbReference>
<dbReference type="InterPro" id="IPR000623">
    <property type="entry name" value="Shikimate_kinase/TSH1"/>
</dbReference>
<dbReference type="InterPro" id="IPR023000">
    <property type="entry name" value="Shikimate_kinase_CS"/>
</dbReference>
<dbReference type="NCBIfam" id="NF003456">
    <property type="entry name" value="PRK05057.1"/>
    <property type="match status" value="1"/>
</dbReference>
<dbReference type="PANTHER" id="PTHR21087">
    <property type="entry name" value="SHIKIMATE KINASE"/>
    <property type="match status" value="1"/>
</dbReference>
<dbReference type="PANTHER" id="PTHR21087:SF16">
    <property type="entry name" value="SHIKIMATE KINASE 1, CHLOROPLASTIC"/>
    <property type="match status" value="1"/>
</dbReference>
<dbReference type="Pfam" id="PF01202">
    <property type="entry name" value="SKI"/>
    <property type="match status" value="1"/>
</dbReference>
<dbReference type="PRINTS" id="PR01100">
    <property type="entry name" value="SHIKIMTKNASE"/>
</dbReference>
<dbReference type="SUPFAM" id="SSF52540">
    <property type="entry name" value="P-loop containing nucleoside triphosphate hydrolases"/>
    <property type="match status" value="1"/>
</dbReference>
<dbReference type="PROSITE" id="PS01128">
    <property type="entry name" value="SHIKIMATE_KINASE"/>
    <property type="match status" value="1"/>
</dbReference>
<keyword id="KW-0028">Amino-acid biosynthesis</keyword>
<keyword id="KW-0057">Aromatic amino acid biosynthesis</keyword>
<keyword id="KW-0067">ATP-binding</keyword>
<keyword id="KW-0963">Cytoplasm</keyword>
<keyword id="KW-0418">Kinase</keyword>
<keyword id="KW-0460">Magnesium</keyword>
<keyword id="KW-0479">Metal-binding</keyword>
<keyword id="KW-0547">Nucleotide-binding</keyword>
<keyword id="KW-1185">Reference proteome</keyword>
<keyword id="KW-0808">Transferase</keyword>
<reference key="1">
    <citation type="submission" date="2007-10" db="EMBL/GenBank/DDBJ databases">
        <title>Complete sequence of Shewanella pealeana ATCC 700345.</title>
        <authorList>
            <consortium name="US DOE Joint Genome Institute"/>
            <person name="Copeland A."/>
            <person name="Lucas S."/>
            <person name="Lapidus A."/>
            <person name="Barry K."/>
            <person name="Glavina del Rio T."/>
            <person name="Dalin E."/>
            <person name="Tice H."/>
            <person name="Pitluck S."/>
            <person name="Chertkov O."/>
            <person name="Brettin T."/>
            <person name="Bruce D."/>
            <person name="Detter J.C."/>
            <person name="Han C."/>
            <person name="Schmutz J."/>
            <person name="Larimer F."/>
            <person name="Land M."/>
            <person name="Hauser L."/>
            <person name="Kyrpides N."/>
            <person name="Kim E."/>
            <person name="Zhao J.-S.Z."/>
            <person name="Manno D."/>
            <person name="Hawari J."/>
            <person name="Richardson P."/>
        </authorList>
    </citation>
    <scope>NUCLEOTIDE SEQUENCE [LARGE SCALE GENOMIC DNA]</scope>
    <source>
        <strain>ATCC 700345 / ANG-SQ1</strain>
    </source>
</reference>
<accession>A8GZ29</accession>
<gene>
    <name evidence="1" type="primary">aroK</name>
    <name type="ordered locus">Spea_0238</name>
</gene>
<name>AROK_SHEPA</name>
<protein>
    <recommendedName>
        <fullName evidence="1">Shikimate kinase</fullName>
        <shortName evidence="1">SK</shortName>
        <ecNumber evidence="1">2.7.1.71</ecNumber>
    </recommendedName>
</protein>
<comment type="function">
    <text evidence="1">Catalyzes the specific phosphorylation of the 3-hydroxyl group of shikimic acid using ATP as a cosubstrate.</text>
</comment>
<comment type="catalytic activity">
    <reaction evidence="1">
        <text>shikimate + ATP = 3-phosphoshikimate + ADP + H(+)</text>
        <dbReference type="Rhea" id="RHEA:13121"/>
        <dbReference type="ChEBI" id="CHEBI:15378"/>
        <dbReference type="ChEBI" id="CHEBI:30616"/>
        <dbReference type="ChEBI" id="CHEBI:36208"/>
        <dbReference type="ChEBI" id="CHEBI:145989"/>
        <dbReference type="ChEBI" id="CHEBI:456216"/>
        <dbReference type="EC" id="2.7.1.71"/>
    </reaction>
</comment>
<comment type="cofactor">
    <cofactor evidence="1">
        <name>Mg(2+)</name>
        <dbReference type="ChEBI" id="CHEBI:18420"/>
    </cofactor>
    <text evidence="1">Binds 1 Mg(2+) ion per subunit.</text>
</comment>
<comment type="pathway">
    <text evidence="1">Metabolic intermediate biosynthesis; chorismate biosynthesis; chorismate from D-erythrose 4-phosphate and phosphoenolpyruvate: step 5/7.</text>
</comment>
<comment type="subunit">
    <text evidence="1">Monomer.</text>
</comment>
<comment type="subcellular location">
    <subcellularLocation>
        <location evidence="1">Cytoplasm</location>
    </subcellularLocation>
</comment>
<comment type="similarity">
    <text evidence="1">Belongs to the shikimate kinase family.</text>
</comment>
<proteinExistence type="inferred from homology"/>